<proteinExistence type="inferred from homology"/>
<accession>Q2RTK2</accession>
<evidence type="ECO:0000255" key="1">
    <source>
        <dbReference type="HAMAP-Rule" id="MF_00151"/>
    </source>
</evidence>
<name>COAD_RHORT</name>
<reference key="1">
    <citation type="journal article" date="2011" name="Stand. Genomic Sci.">
        <title>Complete genome sequence of Rhodospirillum rubrum type strain (S1).</title>
        <authorList>
            <person name="Munk A.C."/>
            <person name="Copeland A."/>
            <person name="Lucas S."/>
            <person name="Lapidus A."/>
            <person name="Del Rio T.G."/>
            <person name="Barry K."/>
            <person name="Detter J.C."/>
            <person name="Hammon N."/>
            <person name="Israni S."/>
            <person name="Pitluck S."/>
            <person name="Brettin T."/>
            <person name="Bruce D."/>
            <person name="Han C."/>
            <person name="Tapia R."/>
            <person name="Gilna P."/>
            <person name="Schmutz J."/>
            <person name="Larimer F."/>
            <person name="Land M."/>
            <person name="Kyrpides N.C."/>
            <person name="Mavromatis K."/>
            <person name="Richardson P."/>
            <person name="Rohde M."/>
            <person name="Goeker M."/>
            <person name="Klenk H.P."/>
            <person name="Zhang Y."/>
            <person name="Roberts G.P."/>
            <person name="Reslewic S."/>
            <person name="Schwartz D.C."/>
        </authorList>
    </citation>
    <scope>NUCLEOTIDE SEQUENCE [LARGE SCALE GENOMIC DNA]</scope>
    <source>
        <strain>ATCC 11170 / ATH 1.1.1 / DSM 467 / LMG 4362 / NCIMB 8255 / S1</strain>
    </source>
</reference>
<sequence length="172" mass="18936">MMPTERIAVYPGTFDPVTNGHLDIISRAARLVDRLTVGVAVNAGKGPLFSLEERVEMVRVAVDKLPTNGATITVVPFANLLMDFACAQGASMIFRGLRAISDFEYEFQMCGMNSRLNSKVETVFLMASERSQFISSRFVKEIGRLGGDIGGFVPAHVRDRLLDRFEEDAESA</sequence>
<keyword id="KW-0067">ATP-binding</keyword>
<keyword id="KW-0173">Coenzyme A biosynthesis</keyword>
<keyword id="KW-0963">Cytoplasm</keyword>
<keyword id="KW-0460">Magnesium</keyword>
<keyword id="KW-0547">Nucleotide-binding</keyword>
<keyword id="KW-0548">Nucleotidyltransferase</keyword>
<keyword id="KW-1185">Reference proteome</keyword>
<keyword id="KW-0808">Transferase</keyword>
<feature type="chain" id="PRO_1000011222" description="Phosphopantetheine adenylyltransferase">
    <location>
        <begin position="1"/>
        <end position="172"/>
    </location>
</feature>
<feature type="binding site" evidence="1">
    <location>
        <begin position="13"/>
        <end position="14"/>
    </location>
    <ligand>
        <name>ATP</name>
        <dbReference type="ChEBI" id="CHEBI:30616"/>
    </ligand>
</feature>
<feature type="binding site" evidence="1">
    <location>
        <position position="13"/>
    </location>
    <ligand>
        <name>substrate</name>
    </ligand>
</feature>
<feature type="binding site" evidence="1">
    <location>
        <position position="21"/>
    </location>
    <ligand>
        <name>ATP</name>
        <dbReference type="ChEBI" id="CHEBI:30616"/>
    </ligand>
</feature>
<feature type="binding site" evidence="1">
    <location>
        <position position="45"/>
    </location>
    <ligand>
        <name>substrate</name>
    </ligand>
</feature>
<feature type="binding site" evidence="1">
    <location>
        <position position="81"/>
    </location>
    <ligand>
        <name>substrate</name>
    </ligand>
</feature>
<feature type="binding site" evidence="1">
    <location>
        <position position="95"/>
    </location>
    <ligand>
        <name>substrate</name>
    </ligand>
</feature>
<feature type="binding site" evidence="1">
    <location>
        <begin position="96"/>
        <end position="98"/>
    </location>
    <ligand>
        <name>ATP</name>
        <dbReference type="ChEBI" id="CHEBI:30616"/>
    </ligand>
</feature>
<feature type="binding site" evidence="1">
    <location>
        <position position="106"/>
    </location>
    <ligand>
        <name>ATP</name>
        <dbReference type="ChEBI" id="CHEBI:30616"/>
    </ligand>
</feature>
<feature type="binding site" evidence="1">
    <location>
        <begin position="131"/>
        <end position="137"/>
    </location>
    <ligand>
        <name>ATP</name>
        <dbReference type="ChEBI" id="CHEBI:30616"/>
    </ligand>
</feature>
<feature type="site" description="Transition state stabilizer" evidence="1">
    <location>
        <position position="21"/>
    </location>
</feature>
<gene>
    <name evidence="1" type="primary">coaD</name>
    <name type="ordered locus">Rru_A1743</name>
</gene>
<organism>
    <name type="scientific">Rhodospirillum rubrum (strain ATCC 11170 / ATH 1.1.1 / DSM 467 / LMG 4362 / NCIMB 8255 / S1)</name>
    <dbReference type="NCBI Taxonomy" id="269796"/>
    <lineage>
        <taxon>Bacteria</taxon>
        <taxon>Pseudomonadati</taxon>
        <taxon>Pseudomonadota</taxon>
        <taxon>Alphaproteobacteria</taxon>
        <taxon>Rhodospirillales</taxon>
        <taxon>Rhodospirillaceae</taxon>
        <taxon>Rhodospirillum</taxon>
    </lineage>
</organism>
<dbReference type="EC" id="2.7.7.3" evidence="1"/>
<dbReference type="EMBL" id="CP000230">
    <property type="protein sequence ID" value="ABC22543.1"/>
    <property type="molecule type" value="Genomic_DNA"/>
</dbReference>
<dbReference type="RefSeq" id="WP_011389496.1">
    <property type="nucleotide sequence ID" value="NC_007643.1"/>
</dbReference>
<dbReference type="RefSeq" id="YP_426830.1">
    <property type="nucleotide sequence ID" value="NC_007643.1"/>
</dbReference>
<dbReference type="SMR" id="Q2RTK2"/>
<dbReference type="STRING" id="269796.Rru_A1743"/>
<dbReference type="EnsemblBacteria" id="ABC22543">
    <property type="protein sequence ID" value="ABC22543"/>
    <property type="gene ID" value="Rru_A1743"/>
</dbReference>
<dbReference type="KEGG" id="rru:Rru_A1743"/>
<dbReference type="PATRIC" id="fig|269796.9.peg.1820"/>
<dbReference type="eggNOG" id="COG0669">
    <property type="taxonomic scope" value="Bacteria"/>
</dbReference>
<dbReference type="HOGENOM" id="CLU_100149_0_1_5"/>
<dbReference type="PhylomeDB" id="Q2RTK2"/>
<dbReference type="UniPathway" id="UPA00241">
    <property type="reaction ID" value="UER00355"/>
</dbReference>
<dbReference type="Proteomes" id="UP000001929">
    <property type="component" value="Chromosome"/>
</dbReference>
<dbReference type="GO" id="GO:0005737">
    <property type="term" value="C:cytoplasm"/>
    <property type="evidence" value="ECO:0007669"/>
    <property type="project" value="UniProtKB-SubCell"/>
</dbReference>
<dbReference type="GO" id="GO:0005524">
    <property type="term" value="F:ATP binding"/>
    <property type="evidence" value="ECO:0007669"/>
    <property type="project" value="UniProtKB-KW"/>
</dbReference>
<dbReference type="GO" id="GO:0004595">
    <property type="term" value="F:pantetheine-phosphate adenylyltransferase activity"/>
    <property type="evidence" value="ECO:0007669"/>
    <property type="project" value="UniProtKB-UniRule"/>
</dbReference>
<dbReference type="GO" id="GO:0015937">
    <property type="term" value="P:coenzyme A biosynthetic process"/>
    <property type="evidence" value="ECO:0007669"/>
    <property type="project" value="UniProtKB-UniRule"/>
</dbReference>
<dbReference type="CDD" id="cd02163">
    <property type="entry name" value="PPAT"/>
    <property type="match status" value="1"/>
</dbReference>
<dbReference type="Gene3D" id="3.40.50.620">
    <property type="entry name" value="HUPs"/>
    <property type="match status" value="1"/>
</dbReference>
<dbReference type="HAMAP" id="MF_00151">
    <property type="entry name" value="PPAT_bact"/>
    <property type="match status" value="1"/>
</dbReference>
<dbReference type="InterPro" id="IPR004821">
    <property type="entry name" value="Cyt_trans-like"/>
</dbReference>
<dbReference type="InterPro" id="IPR001980">
    <property type="entry name" value="PPAT"/>
</dbReference>
<dbReference type="InterPro" id="IPR014729">
    <property type="entry name" value="Rossmann-like_a/b/a_fold"/>
</dbReference>
<dbReference type="NCBIfam" id="TIGR01510">
    <property type="entry name" value="coaD_prev_kdtB"/>
    <property type="match status" value="1"/>
</dbReference>
<dbReference type="NCBIfam" id="TIGR00125">
    <property type="entry name" value="cyt_tran_rel"/>
    <property type="match status" value="1"/>
</dbReference>
<dbReference type="PANTHER" id="PTHR21342">
    <property type="entry name" value="PHOSPHOPANTETHEINE ADENYLYLTRANSFERASE"/>
    <property type="match status" value="1"/>
</dbReference>
<dbReference type="PANTHER" id="PTHR21342:SF1">
    <property type="entry name" value="PHOSPHOPANTETHEINE ADENYLYLTRANSFERASE"/>
    <property type="match status" value="1"/>
</dbReference>
<dbReference type="Pfam" id="PF01467">
    <property type="entry name" value="CTP_transf_like"/>
    <property type="match status" value="1"/>
</dbReference>
<dbReference type="PRINTS" id="PR01020">
    <property type="entry name" value="LPSBIOSNTHSS"/>
</dbReference>
<dbReference type="SUPFAM" id="SSF52374">
    <property type="entry name" value="Nucleotidylyl transferase"/>
    <property type="match status" value="1"/>
</dbReference>
<comment type="function">
    <text evidence="1">Reversibly transfers an adenylyl group from ATP to 4'-phosphopantetheine, yielding dephospho-CoA (dPCoA) and pyrophosphate.</text>
</comment>
<comment type="catalytic activity">
    <reaction evidence="1">
        <text>(R)-4'-phosphopantetheine + ATP + H(+) = 3'-dephospho-CoA + diphosphate</text>
        <dbReference type="Rhea" id="RHEA:19801"/>
        <dbReference type="ChEBI" id="CHEBI:15378"/>
        <dbReference type="ChEBI" id="CHEBI:30616"/>
        <dbReference type="ChEBI" id="CHEBI:33019"/>
        <dbReference type="ChEBI" id="CHEBI:57328"/>
        <dbReference type="ChEBI" id="CHEBI:61723"/>
        <dbReference type="EC" id="2.7.7.3"/>
    </reaction>
</comment>
<comment type="cofactor">
    <cofactor evidence="1">
        <name>Mg(2+)</name>
        <dbReference type="ChEBI" id="CHEBI:18420"/>
    </cofactor>
</comment>
<comment type="pathway">
    <text evidence="1">Cofactor biosynthesis; coenzyme A biosynthesis; CoA from (R)-pantothenate: step 4/5.</text>
</comment>
<comment type="subunit">
    <text evidence="1">Homohexamer.</text>
</comment>
<comment type="subcellular location">
    <subcellularLocation>
        <location evidence="1">Cytoplasm</location>
    </subcellularLocation>
</comment>
<comment type="similarity">
    <text evidence="1">Belongs to the bacterial CoaD family.</text>
</comment>
<protein>
    <recommendedName>
        <fullName evidence="1">Phosphopantetheine adenylyltransferase</fullName>
        <ecNumber evidence="1">2.7.7.3</ecNumber>
    </recommendedName>
    <alternativeName>
        <fullName evidence="1">Dephospho-CoA pyrophosphorylase</fullName>
    </alternativeName>
    <alternativeName>
        <fullName evidence="1">Pantetheine-phosphate adenylyltransferase</fullName>
        <shortName evidence="1">PPAT</shortName>
    </alternativeName>
</protein>